<accession>A6US28</accession>
<sequence>MGNSNELICIGLEGTAEKTGVGVITSNGEVLFNKTVIYTPKIQGIHPREAADHHAETFIKLLNEVSGVIPLDKIDLVSFSQGPGLGPSLRVTATTGRALALSLKKPIIGVNHCVSHVEIGKLKTDALDPLTLYVSGGNTQVLAYTGKKYRVIGETLDIAIGNCLDQFARYCNLSHPGGVFVEQYAKEGKKFLKLPYTVKGMDISFSGLLTASMKKYDSNEKIEDVCYSLQETAFSMLTEITERALSHTNKPEIMLVGGVAANDRLKEMLEIMCNEQNVDFYVPEKQFCGDNGAMIAWLGILQYINGKRMDILDTKTIPHFRTDMVDVNWVVKSTENELDILNKKRQIPRHLIGKGAEADILKGRYLEWESITKERIKKGYRTAELDEMIRTRRTVKEARFLSIIKDFSVNSPHIFDIDIENKKITMEYIHGKLLKDLIEEGNLEFCKSIGELIGKMHEGKIIHNDLTTSNFIVNTDAYMIDFGLGKYSDLIEDKAIDLIVLKKSIMSIHYDKFGEIWDKIIEGYSKYGHSELVLQYIKEVEKRGRYL</sequence>
<feature type="chain" id="PRO_1000024466" description="Probable bifunctional tRNA threonylcarbamoyladenosine biosynthesis protein">
    <location>
        <begin position="1"/>
        <end position="547"/>
    </location>
</feature>
<feature type="domain" description="Protein kinase" evidence="1">
    <location>
        <begin position="346"/>
        <end position="547"/>
    </location>
</feature>
<feature type="region of interest" description="Kae1">
    <location>
        <begin position="1"/>
        <end position="329"/>
    </location>
</feature>
<feature type="active site" description="Proton acceptor; for kinase activity" evidence="1">
    <location>
        <position position="465"/>
    </location>
</feature>
<feature type="binding site" evidence="1">
    <location>
        <position position="112"/>
    </location>
    <ligand>
        <name>Fe cation</name>
        <dbReference type="ChEBI" id="CHEBI:24875"/>
    </ligand>
</feature>
<feature type="binding site" evidence="1">
    <location>
        <position position="116"/>
    </location>
    <ligand>
        <name>Fe cation</name>
        <dbReference type="ChEBI" id="CHEBI:24875"/>
    </ligand>
</feature>
<feature type="binding site" evidence="1">
    <location>
        <begin position="133"/>
        <end position="137"/>
    </location>
    <ligand>
        <name>L-threonylcarbamoyladenylate</name>
        <dbReference type="ChEBI" id="CHEBI:73682"/>
    </ligand>
</feature>
<feature type="binding site" evidence="1">
    <location>
        <position position="133"/>
    </location>
    <ligand>
        <name>Fe cation</name>
        <dbReference type="ChEBI" id="CHEBI:24875"/>
    </ligand>
</feature>
<feature type="binding site" evidence="1">
    <location>
        <position position="165"/>
    </location>
    <ligand>
        <name>L-threonylcarbamoyladenylate</name>
        <dbReference type="ChEBI" id="CHEBI:73682"/>
    </ligand>
</feature>
<feature type="binding site" evidence="1">
    <location>
        <position position="178"/>
    </location>
    <ligand>
        <name>L-threonylcarbamoyladenylate</name>
        <dbReference type="ChEBI" id="CHEBI:73682"/>
    </ligand>
</feature>
<feature type="binding site" evidence="1">
    <location>
        <position position="182"/>
    </location>
    <ligand>
        <name>L-threonylcarbamoyladenylate</name>
        <dbReference type="ChEBI" id="CHEBI:73682"/>
    </ligand>
</feature>
<feature type="binding site" evidence="1">
    <location>
        <position position="262"/>
    </location>
    <ligand>
        <name>L-threonylcarbamoyladenylate</name>
        <dbReference type="ChEBI" id="CHEBI:73682"/>
    </ligand>
</feature>
<feature type="binding site" evidence="1">
    <location>
        <position position="290"/>
    </location>
    <ligand>
        <name>Fe cation</name>
        <dbReference type="ChEBI" id="CHEBI:24875"/>
    </ligand>
</feature>
<feature type="binding site" evidence="1">
    <location>
        <begin position="352"/>
        <end position="360"/>
    </location>
    <ligand>
        <name>ATP</name>
        <dbReference type="ChEBI" id="CHEBI:30616"/>
    </ligand>
</feature>
<feature type="binding site" evidence="1">
    <location>
        <position position="373"/>
    </location>
    <ligand>
        <name>ATP</name>
        <dbReference type="ChEBI" id="CHEBI:30616"/>
    </ligand>
</feature>
<proteinExistence type="inferred from homology"/>
<evidence type="ECO:0000255" key="1">
    <source>
        <dbReference type="HAMAP-Rule" id="MF_01447"/>
    </source>
</evidence>
<organism>
    <name type="scientific">Methanococcus vannielii (strain ATCC 35089 / DSM 1224 / JCM 13029 / OCM 148 / SB)</name>
    <dbReference type="NCBI Taxonomy" id="406327"/>
    <lineage>
        <taxon>Archaea</taxon>
        <taxon>Methanobacteriati</taxon>
        <taxon>Methanobacteriota</taxon>
        <taxon>Methanomada group</taxon>
        <taxon>Methanococci</taxon>
        <taxon>Methanococcales</taxon>
        <taxon>Methanococcaceae</taxon>
        <taxon>Methanococcus</taxon>
    </lineage>
</organism>
<reference key="1">
    <citation type="submission" date="2007-06" db="EMBL/GenBank/DDBJ databases">
        <title>Complete sequence of Methanococcus vannielii SB.</title>
        <authorList>
            <consortium name="US DOE Joint Genome Institute"/>
            <person name="Copeland A."/>
            <person name="Lucas S."/>
            <person name="Lapidus A."/>
            <person name="Barry K."/>
            <person name="Glavina del Rio T."/>
            <person name="Dalin E."/>
            <person name="Tice H."/>
            <person name="Pitluck S."/>
            <person name="Chain P."/>
            <person name="Malfatti S."/>
            <person name="Shin M."/>
            <person name="Vergez L."/>
            <person name="Schmutz J."/>
            <person name="Larimer F."/>
            <person name="Land M."/>
            <person name="Hauser L."/>
            <person name="Kyrpides N."/>
            <person name="Anderson I."/>
            <person name="Sieprawska-Lupa M."/>
            <person name="Whitman W.B."/>
            <person name="Richardson P."/>
        </authorList>
    </citation>
    <scope>NUCLEOTIDE SEQUENCE [LARGE SCALE GENOMIC DNA]</scope>
    <source>
        <strain>ATCC 35089 / DSM 1224 / JCM 13029 / OCM 148 / SB</strain>
    </source>
</reference>
<keyword id="KW-0012">Acyltransferase</keyword>
<keyword id="KW-0067">ATP-binding</keyword>
<keyword id="KW-0963">Cytoplasm</keyword>
<keyword id="KW-0408">Iron</keyword>
<keyword id="KW-0418">Kinase</keyword>
<keyword id="KW-0479">Metal-binding</keyword>
<keyword id="KW-0511">Multifunctional enzyme</keyword>
<keyword id="KW-0547">Nucleotide-binding</keyword>
<keyword id="KW-0723">Serine/threonine-protein kinase</keyword>
<keyword id="KW-0808">Transferase</keyword>
<keyword id="KW-0819">tRNA processing</keyword>
<dbReference type="EC" id="2.3.1.234" evidence="1"/>
<dbReference type="EC" id="2.7.11.1" evidence="1"/>
<dbReference type="EMBL" id="CP000742">
    <property type="protein sequence ID" value="ABR55300.1"/>
    <property type="molecule type" value="Genomic_DNA"/>
</dbReference>
<dbReference type="RefSeq" id="WP_012066214.1">
    <property type="nucleotide sequence ID" value="NC_009634.1"/>
</dbReference>
<dbReference type="SMR" id="A6US28"/>
<dbReference type="STRING" id="406327.Mevan_1404"/>
<dbReference type="GeneID" id="5325135"/>
<dbReference type="KEGG" id="mvn:Mevan_1404"/>
<dbReference type="eggNOG" id="arCOG01183">
    <property type="taxonomic scope" value="Archaea"/>
</dbReference>
<dbReference type="eggNOG" id="arCOG01185">
    <property type="taxonomic scope" value="Archaea"/>
</dbReference>
<dbReference type="HOGENOM" id="CLU_023208_2_2_2"/>
<dbReference type="OrthoDB" id="6818at2157"/>
<dbReference type="Proteomes" id="UP000001107">
    <property type="component" value="Chromosome"/>
</dbReference>
<dbReference type="GO" id="GO:0005737">
    <property type="term" value="C:cytoplasm"/>
    <property type="evidence" value="ECO:0007669"/>
    <property type="project" value="UniProtKB-SubCell"/>
</dbReference>
<dbReference type="GO" id="GO:0000408">
    <property type="term" value="C:EKC/KEOPS complex"/>
    <property type="evidence" value="ECO:0007669"/>
    <property type="project" value="InterPro"/>
</dbReference>
<dbReference type="GO" id="GO:0005524">
    <property type="term" value="F:ATP binding"/>
    <property type="evidence" value="ECO:0007669"/>
    <property type="project" value="UniProtKB-UniRule"/>
</dbReference>
<dbReference type="GO" id="GO:0005506">
    <property type="term" value="F:iron ion binding"/>
    <property type="evidence" value="ECO:0007669"/>
    <property type="project" value="UniProtKB-UniRule"/>
</dbReference>
<dbReference type="GO" id="GO:0004222">
    <property type="term" value="F:metalloendopeptidase activity"/>
    <property type="evidence" value="ECO:0007669"/>
    <property type="project" value="InterPro"/>
</dbReference>
<dbReference type="GO" id="GO:0061711">
    <property type="term" value="F:N(6)-L-threonylcarbamoyladenine synthase activity"/>
    <property type="evidence" value="ECO:0007669"/>
    <property type="project" value="UniProtKB-EC"/>
</dbReference>
<dbReference type="GO" id="GO:0106310">
    <property type="term" value="F:protein serine kinase activity"/>
    <property type="evidence" value="ECO:0007669"/>
    <property type="project" value="RHEA"/>
</dbReference>
<dbReference type="GO" id="GO:0004674">
    <property type="term" value="F:protein serine/threonine kinase activity"/>
    <property type="evidence" value="ECO:0007669"/>
    <property type="project" value="UniProtKB-KW"/>
</dbReference>
<dbReference type="GO" id="GO:0004712">
    <property type="term" value="F:protein serine/threonine/tyrosine kinase activity"/>
    <property type="evidence" value="ECO:0007669"/>
    <property type="project" value="UniProtKB-UniRule"/>
</dbReference>
<dbReference type="GO" id="GO:0008270">
    <property type="term" value="F:zinc ion binding"/>
    <property type="evidence" value="ECO:0007669"/>
    <property type="project" value="InterPro"/>
</dbReference>
<dbReference type="GO" id="GO:0002949">
    <property type="term" value="P:tRNA threonylcarbamoyladenosine modification"/>
    <property type="evidence" value="ECO:0007669"/>
    <property type="project" value="UniProtKB-UniRule"/>
</dbReference>
<dbReference type="CDD" id="cd24131">
    <property type="entry name" value="ASKHA_NBD_Kae1_arch_bac"/>
    <property type="match status" value="1"/>
</dbReference>
<dbReference type="FunFam" id="3.30.420.40:FF:000038">
    <property type="entry name" value="Probable tRNA N6-adenosine threonylcarbamoyltransferase"/>
    <property type="match status" value="1"/>
</dbReference>
<dbReference type="FunFam" id="3.30.200.20:FF:000201">
    <property type="entry name" value="TP53-regulating kinase isoform X1"/>
    <property type="match status" value="1"/>
</dbReference>
<dbReference type="Gene3D" id="3.30.420.40">
    <property type="match status" value="2"/>
</dbReference>
<dbReference type="Gene3D" id="3.30.200.20">
    <property type="entry name" value="Phosphorylase Kinase, domain 1"/>
    <property type="match status" value="1"/>
</dbReference>
<dbReference type="Gene3D" id="1.10.510.10">
    <property type="entry name" value="Transferase(Phosphotransferase) domain 1"/>
    <property type="match status" value="1"/>
</dbReference>
<dbReference type="HAMAP" id="MF_01446">
    <property type="entry name" value="Kae1"/>
    <property type="match status" value="1"/>
</dbReference>
<dbReference type="HAMAP" id="MF_01447">
    <property type="entry name" value="Kae1_Bud32_arch"/>
    <property type="match status" value="1"/>
</dbReference>
<dbReference type="InterPro" id="IPR043129">
    <property type="entry name" value="ATPase_NBD"/>
</dbReference>
<dbReference type="InterPro" id="IPR022495">
    <property type="entry name" value="Bud32"/>
</dbReference>
<dbReference type="InterPro" id="IPR000905">
    <property type="entry name" value="Gcp-like_dom"/>
</dbReference>
<dbReference type="InterPro" id="IPR017861">
    <property type="entry name" value="KAE1/TsaD"/>
</dbReference>
<dbReference type="InterPro" id="IPR034680">
    <property type="entry name" value="Kae1_archaea_euk"/>
</dbReference>
<dbReference type="InterPro" id="IPR011009">
    <property type="entry name" value="Kinase-like_dom_sf"/>
</dbReference>
<dbReference type="InterPro" id="IPR017860">
    <property type="entry name" value="Peptidase_M22_CS"/>
</dbReference>
<dbReference type="InterPro" id="IPR000719">
    <property type="entry name" value="Prot_kinase_dom"/>
</dbReference>
<dbReference type="InterPro" id="IPR018934">
    <property type="entry name" value="RIO_dom"/>
</dbReference>
<dbReference type="InterPro" id="IPR009220">
    <property type="entry name" value="tRNA_threonyl_synthase/kinase"/>
</dbReference>
<dbReference type="InterPro" id="IPR008266">
    <property type="entry name" value="Tyr_kinase_AS"/>
</dbReference>
<dbReference type="NCBIfam" id="TIGR03724">
    <property type="entry name" value="arch_bud32"/>
    <property type="match status" value="1"/>
</dbReference>
<dbReference type="NCBIfam" id="TIGR03722">
    <property type="entry name" value="arch_KAE1"/>
    <property type="match status" value="1"/>
</dbReference>
<dbReference type="NCBIfam" id="TIGR00329">
    <property type="entry name" value="gcp_kae1"/>
    <property type="match status" value="1"/>
</dbReference>
<dbReference type="NCBIfam" id="NF007174">
    <property type="entry name" value="PRK09605.1"/>
    <property type="match status" value="1"/>
</dbReference>
<dbReference type="PANTHER" id="PTHR11735">
    <property type="entry name" value="TRNA N6-ADENOSINE THREONYLCARBAMOYLTRANSFERASE"/>
    <property type="match status" value="1"/>
</dbReference>
<dbReference type="PANTHER" id="PTHR11735:SF14">
    <property type="entry name" value="TRNA N6-ADENOSINE THREONYLCARBAMOYLTRANSFERASE"/>
    <property type="match status" value="1"/>
</dbReference>
<dbReference type="Pfam" id="PF01163">
    <property type="entry name" value="RIO1"/>
    <property type="match status" value="1"/>
</dbReference>
<dbReference type="Pfam" id="PF00814">
    <property type="entry name" value="TsaD"/>
    <property type="match status" value="1"/>
</dbReference>
<dbReference type="PIRSF" id="PIRSF036401">
    <property type="entry name" value="Gcp_STYKS"/>
    <property type="match status" value="1"/>
</dbReference>
<dbReference type="PRINTS" id="PR00789">
    <property type="entry name" value="OSIALOPTASE"/>
</dbReference>
<dbReference type="SUPFAM" id="SSF53067">
    <property type="entry name" value="Actin-like ATPase domain"/>
    <property type="match status" value="1"/>
</dbReference>
<dbReference type="SUPFAM" id="SSF56112">
    <property type="entry name" value="Protein kinase-like (PK-like)"/>
    <property type="match status" value="1"/>
</dbReference>
<dbReference type="PROSITE" id="PS01016">
    <property type="entry name" value="GLYCOPROTEASE"/>
    <property type="match status" value="1"/>
</dbReference>
<dbReference type="PROSITE" id="PS50011">
    <property type="entry name" value="PROTEIN_KINASE_DOM"/>
    <property type="match status" value="1"/>
</dbReference>
<dbReference type="PROSITE" id="PS00109">
    <property type="entry name" value="PROTEIN_KINASE_TYR"/>
    <property type="match status" value="1"/>
</dbReference>
<name>KAE1B_METVS</name>
<protein>
    <recommendedName>
        <fullName evidence="1">Probable bifunctional tRNA threonylcarbamoyladenosine biosynthesis protein</fullName>
    </recommendedName>
    <domain>
        <recommendedName>
            <fullName evidence="1">tRNA N6-adenosine threonylcarbamoyltransferase</fullName>
            <ecNumber evidence="1">2.3.1.234</ecNumber>
        </recommendedName>
        <alternativeName>
            <fullName>N6-L-threonylcarbamoyladenine synthase</fullName>
            <shortName>t(6)A synthase</shortName>
        </alternativeName>
        <alternativeName>
            <fullName evidence="1">t(6)A37 threonylcarbamoyladenosine biosynthesis protein Kae1</fullName>
        </alternativeName>
        <alternativeName>
            <fullName evidence="1">tRNA threonylcarbamoyladenosine biosynthesis protein Kae1</fullName>
        </alternativeName>
    </domain>
    <domain>
        <recommendedName>
            <fullName evidence="1">Serine/threonine-protein kinase Bud32</fullName>
            <ecNumber evidence="1">2.7.11.1</ecNumber>
        </recommendedName>
    </domain>
</protein>
<gene>
    <name type="ordered locus">Mevan_1404</name>
</gene>
<comment type="function">
    <text evidence="1">Required for the formation of a threonylcarbamoyl group on adenosine at position 37 (t(6)A37) in tRNAs that read codons beginning with adenine. Is a component of the KEOPS complex that is probably involved in the transfer of the threonylcarbamoyl moiety of threonylcarbamoyl-AMP (TC-AMP) to the N6 group of A37. The Kae1 domain likely plays a direct catalytic role in this reaction. The Bud32 domain probably displays kinase activity that regulates Kae1 function.</text>
</comment>
<comment type="catalytic activity">
    <reaction evidence="1">
        <text>L-seryl-[protein] + ATP = O-phospho-L-seryl-[protein] + ADP + H(+)</text>
        <dbReference type="Rhea" id="RHEA:17989"/>
        <dbReference type="Rhea" id="RHEA-COMP:9863"/>
        <dbReference type="Rhea" id="RHEA-COMP:11604"/>
        <dbReference type="ChEBI" id="CHEBI:15378"/>
        <dbReference type="ChEBI" id="CHEBI:29999"/>
        <dbReference type="ChEBI" id="CHEBI:30616"/>
        <dbReference type="ChEBI" id="CHEBI:83421"/>
        <dbReference type="ChEBI" id="CHEBI:456216"/>
        <dbReference type="EC" id="2.7.11.1"/>
    </reaction>
</comment>
<comment type="catalytic activity">
    <reaction evidence="1">
        <text>L-threonyl-[protein] + ATP = O-phospho-L-threonyl-[protein] + ADP + H(+)</text>
        <dbReference type="Rhea" id="RHEA:46608"/>
        <dbReference type="Rhea" id="RHEA-COMP:11060"/>
        <dbReference type="Rhea" id="RHEA-COMP:11605"/>
        <dbReference type="ChEBI" id="CHEBI:15378"/>
        <dbReference type="ChEBI" id="CHEBI:30013"/>
        <dbReference type="ChEBI" id="CHEBI:30616"/>
        <dbReference type="ChEBI" id="CHEBI:61977"/>
        <dbReference type="ChEBI" id="CHEBI:456216"/>
        <dbReference type="EC" id="2.7.11.1"/>
    </reaction>
</comment>
<comment type="catalytic activity">
    <reaction evidence="1">
        <text>L-threonylcarbamoyladenylate + adenosine(37) in tRNA = N(6)-L-threonylcarbamoyladenosine(37) in tRNA + AMP + H(+)</text>
        <dbReference type="Rhea" id="RHEA:37059"/>
        <dbReference type="Rhea" id="RHEA-COMP:10162"/>
        <dbReference type="Rhea" id="RHEA-COMP:10163"/>
        <dbReference type="ChEBI" id="CHEBI:15378"/>
        <dbReference type="ChEBI" id="CHEBI:73682"/>
        <dbReference type="ChEBI" id="CHEBI:74411"/>
        <dbReference type="ChEBI" id="CHEBI:74418"/>
        <dbReference type="ChEBI" id="CHEBI:456215"/>
        <dbReference type="EC" id="2.3.1.234"/>
    </reaction>
</comment>
<comment type="cofactor">
    <cofactor evidence="1">
        <name>Fe(2+)</name>
        <dbReference type="ChEBI" id="CHEBI:29033"/>
    </cofactor>
    <text evidence="1">Binds 1 Fe(2+) ion per subunit.</text>
</comment>
<comment type="subunit">
    <text evidence="1">Component of the KEOPS complex that consists of Kae1, Bud32, Cgi121 and Pcc1; the whole complex dimerizes.</text>
</comment>
<comment type="subcellular location">
    <subcellularLocation>
        <location evidence="1">Cytoplasm</location>
    </subcellularLocation>
</comment>
<comment type="similarity">
    <text evidence="1">In the N-terminal section; belongs to the KAE1 / TsaD family.</text>
</comment>
<comment type="similarity">
    <text evidence="1">In the C-terminal section; belongs to the protein kinase superfamily. Tyr protein kinase family. BUD32 subfamily.</text>
</comment>